<organism>
    <name type="scientific">Dictyostelium discoideum</name>
    <name type="common">Social amoeba</name>
    <dbReference type="NCBI Taxonomy" id="44689"/>
    <lineage>
        <taxon>Eukaryota</taxon>
        <taxon>Amoebozoa</taxon>
        <taxon>Evosea</taxon>
        <taxon>Eumycetozoa</taxon>
        <taxon>Dictyostelia</taxon>
        <taxon>Dictyosteliales</taxon>
        <taxon>Dictyosteliaceae</taxon>
        <taxon>Dictyostelium</taxon>
    </lineage>
</organism>
<protein>
    <recommendedName>
        <fullName evidence="1">Dolichyl-phosphate beta-glucosyltransferase</fullName>
        <shortName evidence="1">DolP-glucosyltransferase</shortName>
        <ecNumber evidence="1">2.4.1.117</ecNumber>
    </recommendedName>
    <alternativeName>
        <fullName>Asparagine-linked glycosylation protein 5 homolog</fullName>
    </alternativeName>
</protein>
<evidence type="ECO:0000250" key="1">
    <source>
        <dbReference type="UniProtKB" id="P40350"/>
    </source>
</evidence>
<evidence type="ECO:0000255" key="2"/>
<evidence type="ECO:0000269" key="3">
    <source>
    </source>
</evidence>
<evidence type="ECO:0000305" key="4"/>
<feature type="chain" id="PRO_0000327383" description="Dolichyl-phosphate beta-glucosyltransferase">
    <location>
        <begin position="1"/>
        <end position="327"/>
    </location>
</feature>
<feature type="topological domain" description="Lumenal" evidence="4">
    <location>
        <begin position="1"/>
        <end position="15"/>
    </location>
</feature>
<feature type="transmembrane region" description="Helical" evidence="2">
    <location>
        <begin position="16"/>
        <end position="36"/>
    </location>
</feature>
<feature type="topological domain" description="Cytoplasmic" evidence="4">
    <location>
        <begin position="37"/>
        <end position="327"/>
    </location>
</feature>
<keyword id="KW-0256">Endoplasmic reticulum</keyword>
<keyword id="KW-0328">Glycosyltransferase</keyword>
<keyword id="KW-0472">Membrane</keyword>
<keyword id="KW-1185">Reference proteome</keyword>
<keyword id="KW-0735">Signal-anchor</keyword>
<keyword id="KW-0808">Transferase</keyword>
<keyword id="KW-0812">Transmembrane</keyword>
<keyword id="KW-1133">Transmembrane helix</keyword>
<proteinExistence type="evidence at transcript level"/>
<sequence>MIDLFINIASFTIYGIPVIPLFIIVFVILSYYLLLLHDESPLWLEKENVYIDVKEGEQHQFPSLVENKNPIDNIYLSVIVPAYNEQIRLPSMLDDAIKFLNEKSKKDLKFSYEIIIIDDGSKDSTAKLVTSYIEKQPSSNIRLLKLKQNRGKGGAVKRGILCSRGKYCLMVDADGATEFKDFNRVEDIMHKIEKNDLGIVCGSRSHLVDSDLVAKRSFLRNILMYGFHIFVQTLCVKGIKDTQCGFKLFTRETARRIFPTLHIERWAFDVEILYLAQKLNIPIAEVAVNWTEIDGSKLDPFSSSIQMAKDIVRIRFRYLLGIWKIKS</sequence>
<accession>Q54J42</accession>
<accession>Q6TMJ2</accession>
<dbReference type="EC" id="2.4.1.117" evidence="1"/>
<dbReference type="EMBL" id="AAFI02000111">
    <property type="protein sequence ID" value="EAL63257.1"/>
    <property type="molecule type" value="Genomic_DNA"/>
</dbReference>
<dbReference type="EMBL" id="AY392442">
    <property type="protein sequence ID" value="AAQ98885.1"/>
    <property type="molecule type" value="Genomic_DNA"/>
</dbReference>
<dbReference type="RefSeq" id="XP_636759.1">
    <property type="nucleotide sequence ID" value="XM_631667.1"/>
</dbReference>
<dbReference type="SMR" id="Q54J42"/>
<dbReference type="FunCoup" id="Q54J42">
    <property type="interactions" value="537"/>
</dbReference>
<dbReference type="STRING" id="44689.Q54J42"/>
<dbReference type="CAZy" id="GT2">
    <property type="family name" value="Glycosyltransferase Family 2"/>
</dbReference>
<dbReference type="GlyCosmos" id="Q54J42">
    <property type="glycosylation" value="1 site, No reported glycans"/>
</dbReference>
<dbReference type="PaxDb" id="44689-DDB0191396"/>
<dbReference type="EnsemblProtists" id="EAL63257">
    <property type="protein sequence ID" value="EAL63257"/>
    <property type="gene ID" value="DDB_G0288321"/>
</dbReference>
<dbReference type="GeneID" id="8626562"/>
<dbReference type="KEGG" id="ddi:DDB_G0288321"/>
<dbReference type="dictyBase" id="DDB_G0288321">
    <property type="gene designation" value="dgtA"/>
</dbReference>
<dbReference type="VEuPathDB" id="AmoebaDB:DDB_G0288321"/>
<dbReference type="eggNOG" id="KOG2977">
    <property type="taxonomic scope" value="Eukaryota"/>
</dbReference>
<dbReference type="HOGENOM" id="CLU_033536_9_1_1"/>
<dbReference type="InParanoid" id="Q54J42"/>
<dbReference type="OMA" id="PQPLPCW"/>
<dbReference type="PhylomeDB" id="Q54J42"/>
<dbReference type="Reactome" id="R-DDI-480985">
    <property type="pathway name" value="Synthesis of dolichyl-phosphate-glucose"/>
</dbReference>
<dbReference type="UniPathway" id="UPA00378"/>
<dbReference type="PRO" id="PR:Q54J42"/>
<dbReference type="Proteomes" id="UP000002195">
    <property type="component" value="Chromosome 5"/>
</dbReference>
<dbReference type="GO" id="GO:0005789">
    <property type="term" value="C:endoplasmic reticulum membrane"/>
    <property type="evidence" value="ECO:0000318"/>
    <property type="project" value="GO_Central"/>
</dbReference>
<dbReference type="GO" id="GO:0004581">
    <property type="term" value="F:dolichyl-phosphate beta-glucosyltransferase activity"/>
    <property type="evidence" value="ECO:0000250"/>
    <property type="project" value="dictyBase"/>
</dbReference>
<dbReference type="GO" id="GO:0006487">
    <property type="term" value="P:protein N-linked glycosylation"/>
    <property type="evidence" value="ECO:0000318"/>
    <property type="project" value="GO_Central"/>
</dbReference>
<dbReference type="CDD" id="cd04188">
    <property type="entry name" value="DPG_synthase"/>
    <property type="match status" value="1"/>
</dbReference>
<dbReference type="FunFam" id="3.90.550.10:FF:000068">
    <property type="entry name" value="ALG5, dolichyl-phosphate beta-glucosyltransferase"/>
    <property type="match status" value="1"/>
</dbReference>
<dbReference type="Gene3D" id="3.90.550.10">
    <property type="entry name" value="Spore Coat Polysaccharide Biosynthesis Protein SpsA, Chain A"/>
    <property type="match status" value="1"/>
</dbReference>
<dbReference type="InterPro" id="IPR035518">
    <property type="entry name" value="DPG_synthase"/>
</dbReference>
<dbReference type="InterPro" id="IPR001173">
    <property type="entry name" value="Glyco_trans_2-like"/>
</dbReference>
<dbReference type="InterPro" id="IPR029044">
    <property type="entry name" value="Nucleotide-diphossugar_trans"/>
</dbReference>
<dbReference type="PANTHER" id="PTHR10859:SF91">
    <property type="entry name" value="DOLICHYL-PHOSPHATE BETA-GLUCOSYLTRANSFERASE"/>
    <property type="match status" value="1"/>
</dbReference>
<dbReference type="PANTHER" id="PTHR10859">
    <property type="entry name" value="GLYCOSYL TRANSFERASE"/>
    <property type="match status" value="1"/>
</dbReference>
<dbReference type="Pfam" id="PF00535">
    <property type="entry name" value="Glycos_transf_2"/>
    <property type="match status" value="1"/>
</dbReference>
<dbReference type="SUPFAM" id="SSF53448">
    <property type="entry name" value="Nucleotide-diphospho-sugar transferases"/>
    <property type="match status" value="1"/>
</dbReference>
<gene>
    <name type="primary">alg5</name>
    <name type="synonym">dgtA</name>
    <name type="ORF">DDB_G0288321</name>
</gene>
<name>ALG5_DICDI</name>
<comment type="function">
    <text evidence="1">Endoplasmic reticulum membrane-bound UDP-glucose:dolichyl-phosphate glucosyltransferase involved in protein N-linked glycosylation.</text>
</comment>
<comment type="catalytic activity">
    <reaction evidence="1">
        <text>a di-trans,poly-cis-dolichyl phosphate + UDP-alpha-D-glucose = a di-trans,poly-cis-dolichyl beta-D-glucosyl phosphate + UDP</text>
        <dbReference type="Rhea" id="RHEA:15401"/>
        <dbReference type="Rhea" id="RHEA-COMP:19498"/>
        <dbReference type="Rhea" id="RHEA-COMP:19502"/>
        <dbReference type="ChEBI" id="CHEBI:57525"/>
        <dbReference type="ChEBI" id="CHEBI:57683"/>
        <dbReference type="ChEBI" id="CHEBI:58223"/>
        <dbReference type="ChEBI" id="CHEBI:58885"/>
        <dbReference type="EC" id="2.4.1.117"/>
    </reaction>
    <physiologicalReaction direction="left-to-right" evidence="1">
        <dbReference type="Rhea" id="RHEA:15402"/>
    </physiologicalReaction>
</comment>
<comment type="pathway">
    <text evidence="1">Protein modification; protein glycosylation.</text>
</comment>
<comment type="subcellular location">
    <subcellularLocation>
        <location evidence="1">Endoplasmic reticulum membrane</location>
        <topology evidence="2">Single-pass membrane protein</topology>
    </subcellularLocation>
</comment>
<comment type="induction">
    <text evidence="3">Regulated by srfA.</text>
</comment>
<comment type="similarity">
    <text evidence="4">Belongs to the glycosyltransferase 2 family.</text>
</comment>
<reference key="1">
    <citation type="journal article" date="2005" name="Nature">
        <title>The genome of the social amoeba Dictyostelium discoideum.</title>
        <authorList>
            <person name="Eichinger L."/>
            <person name="Pachebat J.A."/>
            <person name="Gloeckner G."/>
            <person name="Rajandream M.A."/>
            <person name="Sucgang R."/>
            <person name="Berriman M."/>
            <person name="Song J."/>
            <person name="Olsen R."/>
            <person name="Szafranski K."/>
            <person name="Xu Q."/>
            <person name="Tunggal B."/>
            <person name="Kummerfeld S."/>
            <person name="Madera M."/>
            <person name="Konfortov B.A."/>
            <person name="Rivero F."/>
            <person name="Bankier A.T."/>
            <person name="Lehmann R."/>
            <person name="Hamlin N."/>
            <person name="Davies R."/>
            <person name="Gaudet P."/>
            <person name="Fey P."/>
            <person name="Pilcher K."/>
            <person name="Chen G."/>
            <person name="Saunders D."/>
            <person name="Sodergren E.J."/>
            <person name="Davis P."/>
            <person name="Kerhornou A."/>
            <person name="Nie X."/>
            <person name="Hall N."/>
            <person name="Anjard C."/>
            <person name="Hemphill L."/>
            <person name="Bason N."/>
            <person name="Farbrother P."/>
            <person name="Desany B."/>
            <person name="Just E."/>
            <person name="Morio T."/>
            <person name="Rost R."/>
            <person name="Churcher C.M."/>
            <person name="Cooper J."/>
            <person name="Haydock S."/>
            <person name="van Driessche N."/>
            <person name="Cronin A."/>
            <person name="Goodhead I."/>
            <person name="Muzny D.M."/>
            <person name="Mourier T."/>
            <person name="Pain A."/>
            <person name="Lu M."/>
            <person name="Harper D."/>
            <person name="Lindsay R."/>
            <person name="Hauser H."/>
            <person name="James K.D."/>
            <person name="Quiles M."/>
            <person name="Madan Babu M."/>
            <person name="Saito T."/>
            <person name="Buchrieser C."/>
            <person name="Wardroper A."/>
            <person name="Felder M."/>
            <person name="Thangavelu M."/>
            <person name="Johnson D."/>
            <person name="Knights A."/>
            <person name="Loulseged H."/>
            <person name="Mungall K.L."/>
            <person name="Oliver K."/>
            <person name="Price C."/>
            <person name="Quail M.A."/>
            <person name="Urushihara H."/>
            <person name="Hernandez J."/>
            <person name="Rabbinowitsch E."/>
            <person name="Steffen D."/>
            <person name="Sanders M."/>
            <person name="Ma J."/>
            <person name="Kohara Y."/>
            <person name="Sharp S."/>
            <person name="Simmonds M.N."/>
            <person name="Spiegler S."/>
            <person name="Tivey A."/>
            <person name="Sugano S."/>
            <person name="White B."/>
            <person name="Walker D."/>
            <person name="Woodward J.R."/>
            <person name="Winckler T."/>
            <person name="Tanaka Y."/>
            <person name="Shaulsky G."/>
            <person name="Schleicher M."/>
            <person name="Weinstock G.M."/>
            <person name="Rosenthal A."/>
            <person name="Cox E.C."/>
            <person name="Chisholm R.L."/>
            <person name="Gibbs R.A."/>
            <person name="Loomis W.F."/>
            <person name="Platzer M."/>
            <person name="Kay R.R."/>
            <person name="Williams J.G."/>
            <person name="Dear P.H."/>
            <person name="Noegel A.A."/>
            <person name="Barrell B.G."/>
            <person name="Kuspa A."/>
        </authorList>
    </citation>
    <scope>NUCLEOTIDE SEQUENCE [LARGE SCALE GENOMIC DNA]</scope>
    <source>
        <strain>AX4</strain>
    </source>
</reference>
<reference key="2">
    <citation type="journal article" date="2004" name="Eukaryot. Cell">
        <title>Identification of genes dependent on the MADS box transcription factor SrfA in Dictyostelium discoideum development.</title>
        <authorList>
            <person name="Escalante R."/>
            <person name="Iranfar N."/>
            <person name="Sastre L."/>
            <person name="Loomis W.F."/>
        </authorList>
    </citation>
    <scope>NUCLEOTIDE SEQUENCE [GENOMIC DNA] OF 39-327</scope>
    <scope>INDUCTION</scope>
</reference>